<reference key="1">
    <citation type="journal article" date="2008" name="BMC Genomics">
        <title>Genomics of an extreme psychrophile, Psychromonas ingrahamii.</title>
        <authorList>
            <person name="Riley M."/>
            <person name="Staley J.T."/>
            <person name="Danchin A."/>
            <person name="Wang T.Z."/>
            <person name="Brettin T.S."/>
            <person name="Hauser L.J."/>
            <person name="Land M.L."/>
            <person name="Thompson L.S."/>
        </authorList>
    </citation>
    <scope>NUCLEOTIDE SEQUENCE [LARGE SCALE GENOMIC DNA]</scope>
    <source>
        <strain>DSM 17664 / CCUG 51855 / 37</strain>
    </source>
</reference>
<feature type="chain" id="PRO_1000015090" description="Small ribosomal subunit protein uS10">
    <location>
        <begin position="1"/>
        <end position="103"/>
    </location>
</feature>
<evidence type="ECO:0000255" key="1">
    <source>
        <dbReference type="HAMAP-Rule" id="MF_00508"/>
    </source>
</evidence>
<evidence type="ECO:0000305" key="2"/>
<gene>
    <name evidence="1" type="primary">rpsJ</name>
    <name type="ordered locus">Ping_3525</name>
</gene>
<organism>
    <name type="scientific">Psychromonas ingrahamii (strain DSM 17664 / CCUG 51855 / 37)</name>
    <dbReference type="NCBI Taxonomy" id="357804"/>
    <lineage>
        <taxon>Bacteria</taxon>
        <taxon>Pseudomonadati</taxon>
        <taxon>Pseudomonadota</taxon>
        <taxon>Gammaproteobacteria</taxon>
        <taxon>Alteromonadales</taxon>
        <taxon>Psychromonadaceae</taxon>
        <taxon>Psychromonas</taxon>
    </lineage>
</organism>
<accession>A1T0E3</accession>
<proteinExistence type="inferred from homology"/>
<comment type="function">
    <text evidence="1">Involved in the binding of tRNA to the ribosomes.</text>
</comment>
<comment type="subunit">
    <text evidence="1">Part of the 30S ribosomal subunit.</text>
</comment>
<comment type="similarity">
    <text evidence="1">Belongs to the universal ribosomal protein uS10 family.</text>
</comment>
<dbReference type="EMBL" id="CP000510">
    <property type="protein sequence ID" value="ABM05208.1"/>
    <property type="molecule type" value="Genomic_DNA"/>
</dbReference>
<dbReference type="RefSeq" id="WP_011771756.1">
    <property type="nucleotide sequence ID" value="NC_008709.1"/>
</dbReference>
<dbReference type="SMR" id="A1T0E3"/>
<dbReference type="STRING" id="357804.Ping_3525"/>
<dbReference type="KEGG" id="pin:Ping_3525"/>
<dbReference type="eggNOG" id="COG0051">
    <property type="taxonomic scope" value="Bacteria"/>
</dbReference>
<dbReference type="HOGENOM" id="CLU_122625_1_3_6"/>
<dbReference type="OrthoDB" id="9804464at2"/>
<dbReference type="Proteomes" id="UP000000639">
    <property type="component" value="Chromosome"/>
</dbReference>
<dbReference type="GO" id="GO:1990904">
    <property type="term" value="C:ribonucleoprotein complex"/>
    <property type="evidence" value="ECO:0007669"/>
    <property type="project" value="UniProtKB-KW"/>
</dbReference>
<dbReference type="GO" id="GO:0005840">
    <property type="term" value="C:ribosome"/>
    <property type="evidence" value="ECO:0007669"/>
    <property type="project" value="UniProtKB-KW"/>
</dbReference>
<dbReference type="GO" id="GO:0003735">
    <property type="term" value="F:structural constituent of ribosome"/>
    <property type="evidence" value="ECO:0007669"/>
    <property type="project" value="InterPro"/>
</dbReference>
<dbReference type="GO" id="GO:0000049">
    <property type="term" value="F:tRNA binding"/>
    <property type="evidence" value="ECO:0007669"/>
    <property type="project" value="UniProtKB-UniRule"/>
</dbReference>
<dbReference type="GO" id="GO:0006412">
    <property type="term" value="P:translation"/>
    <property type="evidence" value="ECO:0007669"/>
    <property type="project" value="UniProtKB-UniRule"/>
</dbReference>
<dbReference type="FunFam" id="3.30.70.600:FF:000001">
    <property type="entry name" value="30S ribosomal protein S10"/>
    <property type="match status" value="1"/>
</dbReference>
<dbReference type="Gene3D" id="3.30.70.600">
    <property type="entry name" value="Ribosomal protein S10 domain"/>
    <property type="match status" value="1"/>
</dbReference>
<dbReference type="HAMAP" id="MF_00508">
    <property type="entry name" value="Ribosomal_uS10"/>
    <property type="match status" value="1"/>
</dbReference>
<dbReference type="InterPro" id="IPR001848">
    <property type="entry name" value="Ribosomal_uS10"/>
</dbReference>
<dbReference type="InterPro" id="IPR018268">
    <property type="entry name" value="Ribosomal_uS10_CS"/>
</dbReference>
<dbReference type="InterPro" id="IPR027486">
    <property type="entry name" value="Ribosomal_uS10_dom"/>
</dbReference>
<dbReference type="InterPro" id="IPR036838">
    <property type="entry name" value="Ribosomal_uS10_dom_sf"/>
</dbReference>
<dbReference type="NCBIfam" id="NF001861">
    <property type="entry name" value="PRK00596.1"/>
    <property type="match status" value="1"/>
</dbReference>
<dbReference type="NCBIfam" id="TIGR01049">
    <property type="entry name" value="rpsJ_bact"/>
    <property type="match status" value="1"/>
</dbReference>
<dbReference type="PANTHER" id="PTHR11700">
    <property type="entry name" value="30S RIBOSOMAL PROTEIN S10 FAMILY MEMBER"/>
    <property type="match status" value="1"/>
</dbReference>
<dbReference type="Pfam" id="PF00338">
    <property type="entry name" value="Ribosomal_S10"/>
    <property type="match status" value="1"/>
</dbReference>
<dbReference type="PRINTS" id="PR00971">
    <property type="entry name" value="RIBOSOMALS10"/>
</dbReference>
<dbReference type="SMART" id="SM01403">
    <property type="entry name" value="Ribosomal_S10"/>
    <property type="match status" value="1"/>
</dbReference>
<dbReference type="SUPFAM" id="SSF54999">
    <property type="entry name" value="Ribosomal protein S10"/>
    <property type="match status" value="1"/>
</dbReference>
<dbReference type="PROSITE" id="PS00361">
    <property type="entry name" value="RIBOSOMAL_S10"/>
    <property type="match status" value="1"/>
</dbReference>
<protein>
    <recommendedName>
        <fullName evidence="1">Small ribosomal subunit protein uS10</fullName>
    </recommendedName>
    <alternativeName>
        <fullName evidence="2">30S ribosomal protein S10</fullName>
    </alternativeName>
</protein>
<sequence length="103" mass="11725">MQNQRIRIRLKAFDHKLIDQSTAEIVETAKRTGAQVRGPIPLPTRKERFTILVSPHVNKDARDQYEIRTHKRLIDIVEPTEKTVDALMKLDLAAGVDVQISLG</sequence>
<keyword id="KW-1185">Reference proteome</keyword>
<keyword id="KW-0687">Ribonucleoprotein</keyword>
<keyword id="KW-0689">Ribosomal protein</keyword>
<name>RS10_PSYIN</name>